<organism>
    <name type="scientific">Halocynthia aurantium</name>
    <name type="common">Sea peach</name>
    <dbReference type="NCBI Taxonomy" id="254849"/>
    <lineage>
        <taxon>Eukaryota</taxon>
        <taxon>Metazoa</taxon>
        <taxon>Chordata</taxon>
        <taxon>Tunicata</taxon>
        <taxon>Ascidiacea</taxon>
        <taxon>Stolidobranchia</taxon>
        <taxon>Pyuridae</taxon>
        <taxon>Halocynthia</taxon>
    </lineage>
</organism>
<evidence type="ECO:0000269" key="1">
    <source>
    </source>
</evidence>
<name>CYNT_HALAU</name>
<accession>P0C007</accession>
<protein>
    <recommendedName>
        <fullName>Dicynthaurin</fullName>
    </recommendedName>
</protein>
<proteinExistence type="evidence at protein level"/>
<reference key="1">
    <citation type="journal article" date="2001" name="Biochim. Biophys. Acta">
        <title>Dicynthaurin: an antimicrobial peptide from hemocytes of the solitary tunicate, Halocynthia aurantium.</title>
        <authorList>
            <person name="Lee I.H."/>
            <person name="Lee Y.S."/>
            <person name="Kim C.H."/>
            <person name="Kim C.R."/>
            <person name="Hong T."/>
            <person name="Menzel L."/>
            <person name="Boo L.M."/>
            <person name="Pohl J."/>
            <person name="Sherman M.A."/>
            <person name="Waring A."/>
            <person name="Lehrer R.I."/>
        </authorList>
    </citation>
    <scope>PROTEIN SEQUENCE</scope>
    <scope>SYNTHESIS</scope>
    <scope>CIRCULAR DICHROISM ANALYSIS</scope>
    <scope>AMIDATION AT THR-30</scope>
    <scope>MASS SPECTROMETRY</scope>
    <source>
        <tissue>Hemocyte</tissue>
    </source>
</reference>
<dbReference type="GO" id="GO:0005576">
    <property type="term" value="C:extracellular region"/>
    <property type="evidence" value="ECO:0007669"/>
    <property type="project" value="UniProtKB-SubCell"/>
</dbReference>
<dbReference type="GO" id="GO:0042742">
    <property type="term" value="P:defense response to bacterium"/>
    <property type="evidence" value="ECO:0007669"/>
    <property type="project" value="UniProtKB-KW"/>
</dbReference>
<sequence length="30" mass="3106">ILQKAVLDCLKAAGSSLSKAAITAIYNKIT</sequence>
<keyword id="KW-0027">Amidation</keyword>
<keyword id="KW-0044">Antibiotic</keyword>
<keyword id="KW-0929">Antimicrobial</keyword>
<keyword id="KW-0903">Direct protein sequencing</keyword>
<keyword id="KW-1015">Disulfide bond</keyword>
<keyword id="KW-0964">Secreted</keyword>
<comment type="function">
    <text>Shows antibacterial activity against both Gram-positive and Gram-negative bacteria. Its antimicrobial activity is optimal at NaCl concentrations below 100 mM, suggesting that the antimicrobial actions of this peptide may take place intracellularly rather than extracellularly. Has no activity against the fungus C.albicans. Has modest hemolytic activity.</text>
</comment>
<comment type="subunit">
    <text>Homodimer.</text>
</comment>
<comment type="subcellular location">
    <subcellularLocation>
        <location>Secreted</location>
    </subcellularLocation>
</comment>
<comment type="mass spectrometry" mass="3104.2" method="MALDI" evidence="1"/>
<feature type="peptide" id="PRO_0000044129" description="Dicynthaurin">
    <location>
        <begin position="1"/>
        <end position="30"/>
    </location>
</feature>
<feature type="modified residue" description="Threonine amide" evidence="1">
    <location>
        <position position="30"/>
    </location>
</feature>
<feature type="disulfide bond" description="Interchain">
    <location>
        <position position="9"/>
    </location>
</feature>